<sequence length="288" mass="33054">MKDRTQELRTAKDSDDDDDVTVTVDRDRFMDEFFEQVEEIRGFIDKIAENVEEVKRKHSAILASPNPDEKTKEELEELMSDIKKTANKVRSKLKSIEQSIEQEEGLNRSSADLRIRKTQHSTLSRKFVEVMSEYNATQSDYRERCKGRIQRQLEITGRTTTSEELEDMLESGNPAIFASGIIMDSSISKQALSEIETRHSEIIKLETSIRELHDMFMDMAMLVESQGEMIDRIEYNVEHAVDYVERAVSDTKKAVKYQSKARRKKIMIIICCVILGIIIASTIGGIFG</sequence>
<accession>O35526</accession>
<organism>
    <name type="scientific">Mus musculus</name>
    <name type="common">Mouse</name>
    <dbReference type="NCBI Taxonomy" id="10090"/>
    <lineage>
        <taxon>Eukaryota</taxon>
        <taxon>Metazoa</taxon>
        <taxon>Chordata</taxon>
        <taxon>Craniata</taxon>
        <taxon>Vertebrata</taxon>
        <taxon>Euteleostomi</taxon>
        <taxon>Mammalia</taxon>
        <taxon>Eutheria</taxon>
        <taxon>Euarchontoglires</taxon>
        <taxon>Glires</taxon>
        <taxon>Rodentia</taxon>
        <taxon>Myomorpha</taxon>
        <taxon>Muroidea</taxon>
        <taxon>Muridae</taxon>
        <taxon>Murinae</taxon>
        <taxon>Mus</taxon>
        <taxon>Mus</taxon>
    </lineage>
</organism>
<protein>
    <recommendedName>
        <fullName>Syntaxin-1A</fullName>
    </recommendedName>
    <alternativeName>
        <fullName>Neuron-specific antigen HPC-1</fullName>
    </alternativeName>
</protein>
<proteinExistence type="evidence at protein level"/>
<comment type="function">
    <text evidence="7 11 17 18">Plays an essential role in hormone and neurotransmitter calcium-dependent exocytosis and endocytosis (PubMed:17502420, PubMed:28031464, PubMed:28596237). Part of the SNARE (Soluble NSF Attachment Receptor) complex composed of SNAP25, STX1A and VAMP2 which mediates the fusion of synaptic vesicles with the presynaptic plasma membrane. STX1A and SNAP25 are localized on the plasma membrane while VAMP2 resides in synaptic vesicles. The pairing of the three SNAREs from the N-terminal SNARE motifs to the C-terminal anchors leads to the formation of the SNARE complex, which brings membranes into close proximity and results in final fusion. Participates in the calcium-dependent regulation of acrosomal exocytosis in sperm (PubMed:12101244). Also plays an important role in the exocytosis of hormones such as insulin or glucagon-like peptide 1 (GLP-1) (PubMed:17502420, PubMed:28031464, PubMed:28596237).</text>
</comment>
<comment type="subunit">
    <text evidence="2 3 7 8 9 10 12 13 14 15 16 17 19 20">Part of the SNARE core complex containing SNAP25, VAMP2 and STX1A; this complex constitutes the basic catalytic machinery of the complex neurotransmitter release apparatus (PubMed:19196426, PubMed:28031464, PubMed:28821673). The SNARE complex interacts with CPLX1 (By similarity). Interacts with STXBP1 (PubMed:21445306, PubMed:28031464, PubMed:28821673). The interaction with STXBP1 promotes assembly of the SNARE complex (PubMed:28821673). Interacts (via C-terminus) with KCNB1 (via C-terminus); the interaction increases in a calcium-dependent manner and induces a pore-independent enhancement of exocytosis in neuroendocrine cells, chromaffin cells, pancreatic beta cells and from the soma of dorsal root ganglia (DRG) neurons (By similarity). Interacts with SYTL4 (PubMed:12101244). Interacts with STXBP6 (By similarity). Interacts with PLCL1 (via C2 domain) (PubMed:23341457). Interacts with OTOF (PubMed:17055430). Interacts with LGI3 (PubMed:18760330). Interacts (via the H3 domain) with SLC6A4 (via the N-terminus); this interaction regulates SLC4A6 channel conductance in thalamocortical neurons (By similarity). Interacts with SYT6 and SYT8; the interaction is Ca(2+)-dependent (PubMed:15774481). Interacts with VAMP8 (PubMed:28031464). Interacts with SNAP23 (PubMed:28031464). Interacts with VAPA and SYBU (By similarity). Interacts with PRRT2 (PubMed:29056747). Interacts with SEPT8 (By similarity). Interacts with STXBP5L (PubMed:21998599). Interacts with synaptotagmin-1/SYT1 (By similarity). Interacts with SEPTIN5; in the cerebellar cortex (PubMed:17296554). Interacts with SEPTIN4; in the striatum (PubMed:17296554).</text>
</comment>
<comment type="interaction">
    <interactant intactId="EBI-400878">
        <id>O35526</id>
    </interactant>
    <interactant intactId="EBI-8400083">
        <id>O08547</id>
        <label>Sec22b</label>
    </interactant>
    <organismsDiffer>false</organismsDiffer>
    <experiments>4</experiments>
</comment>
<comment type="interaction">
    <interactant intactId="EBI-400878">
        <id>O35526</id>
    </interactant>
    <interactant intactId="EBI-445270">
        <id>P60879</id>
        <label>Snap25</label>
    </interactant>
    <organismsDiffer>false</organismsDiffer>
    <experiments>4</experiments>
</comment>
<comment type="interaction">
    <interactant intactId="EBI-400878">
        <id>O35526</id>
    </interactant>
    <interactant intactId="EBI-457969">
        <id>P46097</id>
        <label>Syt2</label>
    </interactant>
    <organismsDiffer>false</organismsDiffer>
    <experiments>2</experiments>
</comment>
<comment type="interaction">
    <interactant intactId="EBI-400878">
        <id>O35526</id>
    </interactant>
    <interactant intactId="EBI-458098">
        <id>P21707</id>
        <label>Syt1</label>
    </interactant>
    <organismsDiffer>true</organismsDiffer>
    <experiments>3</experiments>
</comment>
<comment type="interaction">
    <interactant intactId="EBI-400878">
        <id>O35526</id>
    </interactant>
    <interactant intactId="EBI-16179541">
        <id>Q62747</id>
        <label>Syt7</label>
    </interactant>
    <organismsDiffer>true</organismsDiffer>
    <experiments>2</experiments>
</comment>
<comment type="subcellular location">
    <subcellularLocation>
        <location evidence="12">Cytoplasmic vesicle</location>
        <location evidence="12">Secretory vesicle</location>
        <location evidence="12">Synaptic vesicle membrane</location>
        <topology evidence="12">Single-pass type IV membrane protein</topology>
    </subcellularLocation>
    <subcellularLocation>
        <location evidence="12">Synapse</location>
        <location evidence="12">Synaptosome</location>
    </subcellularLocation>
    <subcellularLocation>
        <location evidence="2">Cell membrane</location>
    </subcellularLocation>
    <text evidence="2">Colocalizes with KCNB1 at the cell membrane.</text>
</comment>
<comment type="tissue specificity">
    <text evidence="10 18">Expressed in the striatum (at protein level) (PubMed:17296554). Expressed in the ileum (PubMed:28596237).</text>
</comment>
<comment type="PTM">
    <text evidence="1">Phosphorylated by CK2. Phosphorylation at Ser-188 by DAPK1 significantly decreases its interaction with STXBP1 (By similarity).</text>
</comment>
<comment type="PTM">
    <text evidence="1 3">Phosphorylated by CK2 (By similarity). Phosphorylation at Ser-188 by DAPK1 significantly decreases its interaction with STXBP1 (By similarity).</text>
</comment>
<comment type="PTM">
    <text evidence="3">Sumoylated, sumoylation is required for regulation of synaptic vesicle endocytosis.</text>
</comment>
<comment type="disruption phenotype">
    <text evidence="11 17 18">Mutant mice show impaired glucose tolerance without any marked hyperglycemia.</text>
</comment>
<comment type="similarity">
    <text evidence="21">Belongs to the syntaxin family.</text>
</comment>
<feature type="chain" id="PRO_0000210187" description="Syntaxin-1A">
    <location>
        <begin position="1"/>
        <end position="288"/>
    </location>
</feature>
<feature type="topological domain" description="Cytoplasmic" evidence="4">
    <location>
        <begin position="1"/>
        <end position="265"/>
    </location>
</feature>
<feature type="transmembrane region" description="Helical; Anchor for type IV membrane protein" evidence="4">
    <location>
        <begin position="266"/>
        <end position="286"/>
    </location>
</feature>
<feature type="topological domain" description="Extracellular" evidence="4">
    <location>
        <begin position="287"/>
        <end position="288"/>
    </location>
</feature>
<feature type="domain" description="t-SNARE coiled-coil homology" evidence="5">
    <location>
        <begin position="192"/>
        <end position="254"/>
    </location>
</feature>
<feature type="region of interest" description="Disordered" evidence="6">
    <location>
        <begin position="1"/>
        <end position="20"/>
    </location>
</feature>
<feature type="coiled-coil region" evidence="4">
    <location>
        <begin position="68"/>
        <end position="109"/>
    </location>
</feature>
<feature type="compositionally biased region" description="Basic and acidic residues" evidence="6">
    <location>
        <begin position="1"/>
        <end position="13"/>
    </location>
</feature>
<feature type="modified residue" description="Phosphoserine" evidence="22 23">
    <location>
        <position position="14"/>
    </location>
</feature>
<feature type="modified residue" description="Phosphoserine" evidence="23">
    <location>
        <position position="64"/>
    </location>
</feature>
<feature type="modified residue" description="Phosphoserine" evidence="2">
    <location>
        <position position="95"/>
    </location>
</feature>
<feature type="modified residue" description="Phosphoserine; by DAPK1" evidence="3">
    <location>
        <position position="188"/>
    </location>
</feature>
<feature type="cross-link" description="Glycyl lysine isopeptide (Lys-Gly) (interchain with G-Cter in SUMO)" evidence="3">
    <location>
        <position position="252"/>
    </location>
</feature>
<feature type="cross-link" description="Glycyl lysine isopeptide (Lys-Gly) (interchain with G-Cter in SUMO)" evidence="3">
    <location>
        <position position="253"/>
    </location>
</feature>
<feature type="cross-link" description="Glycyl lysine isopeptide (Lys-Gly) (interchain with G-Cter in SUMO)" evidence="3">
    <location>
        <position position="256"/>
    </location>
</feature>
<reference key="1">
    <citation type="submission" date="2001-07" db="EMBL/GenBank/DDBJ databases">
        <authorList>
            <person name="Fujiwara T."/>
            <person name="Genda M."/>
            <person name="Nagai A."/>
            <person name="Okazaki M."/>
            <person name="Watanabe T."/>
            <person name="Nagamatsu S."/>
            <person name="Akagawa K."/>
        </authorList>
    </citation>
    <scope>NUCLEOTIDE SEQUENCE [MRNA]</scope>
    <source>
        <tissue>Brain</tissue>
    </source>
</reference>
<reference key="2">
    <citation type="submission" date="2007-04" db="UniProtKB">
        <authorList>
            <person name="Lubec G."/>
            <person name="Kang S.U."/>
        </authorList>
    </citation>
    <scope>PROTEIN SEQUENCE OF 29-41; 47-56; 58-84; 95-108; 126-142; 152-158 AND 233-246</scope>
    <scope>IDENTIFICATION BY MASS SPECTROMETRY</scope>
    <source>
        <strain>C57BL/6J</strain>
        <tissue>Brain</tissue>
    </source>
</reference>
<reference key="3">
    <citation type="journal article" date="2002" name="Mol. Cell. Biol.">
        <title>Granuphilin modulates the exocytosis of secretory granules through interaction with syntaxin 1a.</title>
        <authorList>
            <person name="Torii S."/>
            <person name="Zhao S."/>
            <person name="Yi Z."/>
            <person name="Takeuchi T."/>
            <person name="Izumi T."/>
        </authorList>
    </citation>
    <scope>INTERACTION WITH SYTL4</scope>
</reference>
<reference key="4">
    <citation type="journal article" date="2005" name="J. Biol. Chem.">
        <title>Synaptotagmin VI and VIII and syntaxin 2 are essential for the mouse sperm acrosome reaction.</title>
        <authorList>
            <person name="Hutt D.M."/>
            <person name="Baltz J.M."/>
            <person name="Ngsee J.K."/>
        </authorList>
    </citation>
    <scope>FUNCTION</scope>
    <scope>INTERACTION WITH SYT6 AND SYT8</scope>
</reference>
<reference key="5">
    <citation type="journal article" date="2006" name="Cell">
        <title>Otoferlin, defective in a human deafness form, is essential for exocytosis at the auditory ribbon synapse.</title>
        <authorList>
            <person name="Roux I."/>
            <person name="Safieddine S."/>
            <person name="Nouvian R."/>
            <person name="Grati M."/>
            <person name="Simmler M.-C."/>
            <person name="Bahloul A."/>
            <person name="Perfettini I."/>
            <person name="Le Gall M."/>
            <person name="Rostaing P."/>
            <person name="Hamard G."/>
            <person name="Triller A."/>
            <person name="Avan P."/>
            <person name="Moser T."/>
            <person name="Petit C."/>
        </authorList>
    </citation>
    <scope>INTERACTION WITH OTOF</scope>
    <source>
        <strain>BALB/cJ</strain>
        <tissue>Cochlea</tissue>
    </source>
</reference>
<reference key="6">
    <citation type="journal article" date="2006" name="Mol. Cell. Proteomics">
        <title>Comprehensive identification of phosphorylation sites in postsynaptic density preparations.</title>
        <authorList>
            <person name="Trinidad J.C."/>
            <person name="Specht C.G."/>
            <person name="Thalhammer A."/>
            <person name="Schoepfer R."/>
            <person name="Burlingame A.L."/>
        </authorList>
    </citation>
    <scope>PHOSPHORYLATION [LARGE SCALE ANALYSIS] AT SER-14</scope>
    <scope>IDENTIFICATION BY MASS SPECTROMETRY [LARGE SCALE ANALYSIS]</scope>
    <source>
        <tissue>Brain</tissue>
    </source>
</reference>
<reference key="7">
    <citation type="journal article" date="2007" name="J. Cell Biol.">
        <title>Imaging analysis reveals mechanistic differences between first- and second-phase insulin exocytosis.</title>
        <authorList>
            <person name="Ohara-Imaizumi M."/>
            <person name="Fujiwara T."/>
            <person name="Nakamichi Y."/>
            <person name="Okamura T."/>
            <person name="Akimoto Y."/>
            <person name="Kawai J."/>
            <person name="Matsushima S."/>
            <person name="Kawakami H."/>
            <person name="Watanabe T."/>
            <person name="Akagawa K."/>
            <person name="Nagamatsu S."/>
        </authorList>
    </citation>
    <scope>FUNCTION</scope>
    <scope>DISRUPTION PHENOTYPE</scope>
</reference>
<reference key="8">
    <citation type="journal article" date="2007" name="Neuron">
        <title>Sept4, a component of presynaptic scaffold and Lewy bodies, is required for the suppression of alpha-synuclein neurotoxicity.</title>
        <authorList>
            <person name="Ihara M."/>
            <person name="Yamasaki N."/>
            <person name="Hagiwara A."/>
            <person name="Tanigaki A."/>
            <person name="Kitano A."/>
            <person name="Hikawa R."/>
            <person name="Tomimoto H."/>
            <person name="Noda M."/>
            <person name="Takanashi M."/>
            <person name="Mori H."/>
            <person name="Hattori N."/>
            <person name="Miyakawa T."/>
            <person name="Kinoshita M."/>
        </authorList>
    </citation>
    <scope>INTERACTION WITH SEPTIN4 AND SEPTIN5</scope>
    <scope>TISSUE SPECIFICITY</scope>
</reference>
<reference key="9">
    <citation type="journal article" date="2008" name="Neurosci. Lett.">
        <title>Leucine-rich glioma inactivated 3 associates with syntaxin 1.</title>
        <authorList>
            <person name="Park W.-J."/>
            <person name="Lee S.E."/>
            <person name="Kwon N.S."/>
            <person name="Baek K.J."/>
            <person name="Kim D.-S."/>
            <person name="Yun H.-Y."/>
        </authorList>
    </citation>
    <scope>SUBCELLULAR LOCATION</scope>
    <scope>INTERACTION WITH LGI3</scope>
</reference>
<reference key="10">
    <citation type="journal article" date="2009" name="J. Neurochem.">
        <title>Sept8 controls the binding of vesicle-associated membrane protein 2 to synaptophysin.</title>
        <authorList>
            <person name="Ito H."/>
            <person name="Atsuzawa K."/>
            <person name="Morishita R."/>
            <person name="Usuda N."/>
            <person name="Sudo K."/>
            <person name="Iwamoto I."/>
            <person name="Mizutani K."/>
            <person name="Katoh-Semba R."/>
            <person name="Nozawa Y."/>
            <person name="Asano T."/>
            <person name="Nagata K."/>
        </authorList>
    </citation>
    <scope>INTERACTION WITH VAMP2</scope>
</reference>
<reference key="11">
    <citation type="journal article" date="2010" name="Cell">
        <title>A tissue-specific atlas of mouse protein phosphorylation and expression.</title>
        <authorList>
            <person name="Huttlin E.L."/>
            <person name="Jedrychowski M.P."/>
            <person name="Elias J.E."/>
            <person name="Goswami T."/>
            <person name="Rad R."/>
            <person name="Beausoleil S.A."/>
            <person name="Villen J."/>
            <person name="Haas W."/>
            <person name="Sowa M.E."/>
            <person name="Gygi S.P."/>
        </authorList>
    </citation>
    <scope>PHOSPHORYLATION [LARGE SCALE ANALYSIS] AT SER-14 AND SER-64</scope>
    <scope>IDENTIFICATION BY MASS SPECTROMETRY [LARGE SCALE ANALYSIS]</scope>
    <source>
        <tissue>Brain</tissue>
    </source>
</reference>
<reference key="12">
    <citation type="journal article" date="2011" name="PLoS Genet.">
        <title>Positional cloning of a type 2 diabetes quantitative trait locus; tomosyn-2, a negative regulator of insulin secretion.</title>
        <authorList>
            <person name="Bhatnagar S."/>
            <person name="Oler A.T."/>
            <person name="Rabaglia M.E."/>
            <person name="Stapleton D.S."/>
            <person name="Schueler K.L."/>
            <person name="Truchan N.A."/>
            <person name="Worzella S.L."/>
            <person name="Stoehr J.P."/>
            <person name="Clee S.M."/>
            <person name="Yandell B.S."/>
            <person name="Keller M.P."/>
            <person name="Thurmond D.C."/>
            <person name="Attie A.D."/>
        </authorList>
    </citation>
    <scope>INTERACTION WITH STXBP5L</scope>
</reference>
<reference key="13">
    <citation type="journal article" date="2011" name="PLoS ONE">
        <title>Structure-function study of mammalian Munc18-1 and C. elegans UNC-18 implicates domain 3b in the regulation of exocytosis.</title>
        <authorList>
            <person name="Graham M.E."/>
            <person name="Prescott G.R."/>
            <person name="Johnson J.R."/>
            <person name="Jones M."/>
            <person name="Walmesley A."/>
            <person name="Haynes L.P."/>
            <person name="Morgan A."/>
            <person name="Burgoyne R.D."/>
            <person name="Barclay J.W."/>
        </authorList>
    </citation>
    <scope>INTERACTION WITH STXBP1</scope>
</reference>
<reference key="14">
    <citation type="journal article" date="2013" name="J. Biol. Chem.">
        <title>PRIP (phospholipase C-related but catalytically inactive protein) inhibits exocytosis by direct interactions with syntaxin 1 and SNAP-25 through its C2 domain.</title>
        <authorList>
            <person name="Zhang Z."/>
            <person name="Takeuchi H."/>
            <person name="Gao J."/>
            <person name="Wang D."/>
            <person name="James D.J."/>
            <person name="Martin T.F."/>
            <person name="Hirata M."/>
        </authorList>
    </citation>
    <scope>INTERACTION WITH PLCL1</scope>
</reference>
<reference key="15">
    <citation type="journal article" date="2017" name="Diabetes">
        <title>The SNARE protein syntaxin-1a Plays an essential role in biphasic exocytosis of the incretin hormone glucagon-like peptide 1.</title>
        <authorList>
            <person name="Wheeler S.E."/>
            <person name="Stacey H.M."/>
            <person name="Nahaei Y."/>
            <person name="Hale S.J."/>
            <person name="Hardy A.B."/>
            <person name="Reimann F."/>
            <person name="Gribble F.M."/>
            <person name="Larraufie P."/>
            <person name="Gaisano H.Y."/>
            <person name="Brubaker P.L."/>
        </authorList>
    </citation>
    <scope>FUNCTION</scope>
    <scope>TISSUE SPECIFICITY</scope>
    <scope>DISRUPTION PHENOTYPE</scope>
</reference>
<reference key="16">
    <citation type="journal article" date="2017" name="J. Biol. Chem.">
        <title>New Roles of Syntaxin-1A in Insulin Granule Exocytosis and Replenishment.</title>
        <authorList>
            <person name="Liang T."/>
            <person name="Qin T."/>
            <person name="Xie L."/>
            <person name="Dolai S."/>
            <person name="Zhu D."/>
            <person name="Prentice K.J."/>
            <person name="Wheeler M."/>
            <person name="Kang Y."/>
            <person name="Osborne L."/>
            <person name="Gaisano H.Y."/>
        </authorList>
    </citation>
    <scope>FUNCTION</scope>
    <scope>INTERACTION WITH VAMP2; VAMP8; SNAP23; SNAP25 AND STXBP1</scope>
    <scope>DISRUPTION PHENOTYPE</scope>
</reference>
<reference key="17">
    <citation type="journal article" date="2017" name="J. Neurosci.">
        <title>UNC-18 and Tomosyn Antagonistically Control Synaptic Vesicle Priming Downstream of UNC-13 in Caenorhabditis elegans.</title>
        <authorList>
            <person name="Park S."/>
            <person name="Bin N.R."/>
            <person name="Yu B."/>
            <person name="Wong R."/>
            <person name="Sitarska E."/>
            <person name="Sugita K."/>
            <person name="Ma K."/>
            <person name="Xu J."/>
            <person name="Tien C.W."/>
            <person name="Algouneh A."/>
            <person name="Turlova E."/>
            <person name="Wang S."/>
            <person name="Siriya P."/>
            <person name="Shahid W."/>
            <person name="Kalia L."/>
            <person name="Feng Z.P."/>
            <person name="Monnier P.P."/>
            <person name="Sun H.S."/>
            <person name="Zhen M."/>
            <person name="Gao S."/>
            <person name="Rizo J."/>
            <person name="Sugita S."/>
        </authorList>
    </citation>
    <scope>IDENTIFICATION IN THE SNARE COMPLEX</scope>
    <scope>INTERACTION WITH STXBP1</scope>
</reference>
<reference key="18">
    <citation type="journal article" date="2018" name="Cell Res.">
        <title>PRRT2 deficiency induces paroxysmal kinesigenic dyskinesia by regulating synaptic transmission in cerebellum.</title>
        <authorList>
            <person name="Tan G.H."/>
            <person name="Liu Y.Y."/>
            <person name="Wang L."/>
            <person name="Li K."/>
            <person name="Zhang Z.Q."/>
            <person name="Li H.F."/>
            <person name="Yang Z.F."/>
            <person name="Li Y."/>
            <person name="Li D."/>
            <person name="Wu M.Y."/>
            <person name="Yu C.L."/>
            <person name="Long J.J."/>
            <person name="Chen R.C."/>
            <person name="Li L.X."/>
            <person name="Yin L.P."/>
            <person name="Liu J.W."/>
            <person name="Cheng X.W."/>
            <person name="Shen Q."/>
            <person name="Shu Y.S."/>
            <person name="Sakimura K."/>
            <person name="Liao L.J."/>
            <person name="Wu Z.Y."/>
            <person name="Xiong Z.Q."/>
        </authorList>
    </citation>
    <scope>INTERACTION WITH PRRT2</scope>
</reference>
<evidence type="ECO:0000250" key="1"/>
<evidence type="ECO:0000250" key="2">
    <source>
        <dbReference type="UniProtKB" id="P32851"/>
    </source>
</evidence>
<evidence type="ECO:0000250" key="3">
    <source>
        <dbReference type="UniProtKB" id="Q16623"/>
    </source>
</evidence>
<evidence type="ECO:0000255" key="4"/>
<evidence type="ECO:0000255" key="5">
    <source>
        <dbReference type="PROSITE-ProRule" id="PRU00202"/>
    </source>
</evidence>
<evidence type="ECO:0000256" key="6">
    <source>
        <dbReference type="SAM" id="MobiDB-lite"/>
    </source>
</evidence>
<evidence type="ECO:0000269" key="7">
    <source>
    </source>
</evidence>
<evidence type="ECO:0000269" key="8">
    <source>
    </source>
</evidence>
<evidence type="ECO:0000269" key="9">
    <source>
    </source>
</evidence>
<evidence type="ECO:0000269" key="10">
    <source>
    </source>
</evidence>
<evidence type="ECO:0000269" key="11">
    <source>
    </source>
</evidence>
<evidence type="ECO:0000269" key="12">
    <source>
    </source>
</evidence>
<evidence type="ECO:0000269" key="13">
    <source>
    </source>
</evidence>
<evidence type="ECO:0000269" key="14">
    <source>
    </source>
</evidence>
<evidence type="ECO:0000269" key="15">
    <source>
    </source>
</evidence>
<evidence type="ECO:0000269" key="16">
    <source>
    </source>
</evidence>
<evidence type="ECO:0000269" key="17">
    <source>
    </source>
</evidence>
<evidence type="ECO:0000269" key="18">
    <source>
    </source>
</evidence>
<evidence type="ECO:0000269" key="19">
    <source>
    </source>
</evidence>
<evidence type="ECO:0000269" key="20">
    <source>
    </source>
</evidence>
<evidence type="ECO:0000305" key="21"/>
<evidence type="ECO:0007744" key="22">
    <source>
    </source>
</evidence>
<evidence type="ECO:0007744" key="23">
    <source>
    </source>
</evidence>
<gene>
    <name type="primary">Stx1a</name>
</gene>
<keyword id="KW-1003">Cell membrane</keyword>
<keyword id="KW-0175">Coiled coil</keyword>
<keyword id="KW-0968">Cytoplasmic vesicle</keyword>
<keyword id="KW-0903">Direct protein sequencing</keyword>
<keyword id="KW-0268">Exocytosis</keyword>
<keyword id="KW-1017">Isopeptide bond</keyword>
<keyword id="KW-0472">Membrane</keyword>
<keyword id="KW-0532">Neurotransmitter transport</keyword>
<keyword id="KW-0597">Phosphoprotein</keyword>
<keyword id="KW-1185">Reference proteome</keyword>
<keyword id="KW-0770">Synapse</keyword>
<keyword id="KW-0771">Synaptosome</keyword>
<keyword id="KW-0812">Transmembrane</keyword>
<keyword id="KW-1133">Transmembrane helix</keyword>
<keyword id="KW-0813">Transport</keyword>
<keyword id="KW-0832">Ubl conjugation</keyword>
<dbReference type="EMBL" id="D45208">
    <property type="protein sequence ID" value="BAA28865.2"/>
    <property type="molecule type" value="mRNA"/>
</dbReference>
<dbReference type="CCDS" id="CCDS19731.1"/>
<dbReference type="RefSeq" id="NP_058081.2">
    <property type="nucleotide sequence ID" value="NM_016801.4"/>
</dbReference>
<dbReference type="BMRB" id="O35526"/>
<dbReference type="SMR" id="O35526"/>
<dbReference type="BioGRID" id="203561">
    <property type="interactions" value="35"/>
</dbReference>
<dbReference type="CORUM" id="O35526"/>
<dbReference type="DIP" id="DIP-31950N"/>
<dbReference type="FunCoup" id="O35526">
    <property type="interactions" value="796"/>
</dbReference>
<dbReference type="IntAct" id="O35526">
    <property type="interactions" value="20"/>
</dbReference>
<dbReference type="MINT" id="O35526"/>
<dbReference type="STRING" id="10090.ENSMUSP00000005509"/>
<dbReference type="GlyGen" id="O35526">
    <property type="glycosylation" value="3 sites, 2 N-linked glycans (2 sites), 1 O-linked glycan (1 site)"/>
</dbReference>
<dbReference type="iPTMnet" id="O35526"/>
<dbReference type="MetOSite" id="O35526"/>
<dbReference type="PhosphoSitePlus" id="O35526"/>
<dbReference type="SwissPalm" id="O35526"/>
<dbReference type="PaxDb" id="10090-ENSMUSP00000005509"/>
<dbReference type="PeptideAtlas" id="O35526"/>
<dbReference type="ProteomicsDB" id="258768"/>
<dbReference type="Antibodypedia" id="3644">
    <property type="antibodies" value="695 antibodies from 45 providers"/>
</dbReference>
<dbReference type="DNASU" id="20907"/>
<dbReference type="Ensembl" id="ENSMUST00000005509.11">
    <property type="protein sequence ID" value="ENSMUSP00000005509.5"/>
    <property type="gene ID" value="ENSMUSG00000007207.11"/>
</dbReference>
<dbReference type="GeneID" id="20907"/>
<dbReference type="KEGG" id="mmu:20907"/>
<dbReference type="UCSC" id="uc008zxk.1">
    <property type="organism name" value="mouse"/>
</dbReference>
<dbReference type="AGR" id="MGI:109355"/>
<dbReference type="CTD" id="6804"/>
<dbReference type="MGI" id="MGI:109355">
    <property type="gene designation" value="Stx1a"/>
</dbReference>
<dbReference type="VEuPathDB" id="HostDB:ENSMUSG00000007207"/>
<dbReference type="eggNOG" id="KOG0810">
    <property type="taxonomic scope" value="Eukaryota"/>
</dbReference>
<dbReference type="GeneTree" id="ENSGT01030000234627"/>
<dbReference type="HOGENOM" id="CLU_042423_2_2_1"/>
<dbReference type="InParanoid" id="O35526"/>
<dbReference type="OMA" id="KTTHGPK"/>
<dbReference type="OrthoDB" id="10255013at2759"/>
<dbReference type="PhylomeDB" id="O35526"/>
<dbReference type="TreeFam" id="TF313763"/>
<dbReference type="Reactome" id="R-MMU-181429">
    <property type="pathway name" value="Serotonin Neurotransmitter Release Cycle"/>
</dbReference>
<dbReference type="Reactome" id="R-MMU-181430">
    <property type="pathway name" value="Norepinephrine Neurotransmitter Release Cycle"/>
</dbReference>
<dbReference type="Reactome" id="R-MMU-210500">
    <property type="pathway name" value="Glutamate Neurotransmitter Release Cycle"/>
</dbReference>
<dbReference type="Reactome" id="R-MMU-212676">
    <property type="pathway name" value="Dopamine Neurotransmitter Release Cycle"/>
</dbReference>
<dbReference type="Reactome" id="R-MMU-264642">
    <property type="pathway name" value="Acetylcholine Neurotransmitter Release Cycle"/>
</dbReference>
<dbReference type="Reactome" id="R-MMU-449836">
    <property type="pathway name" value="Other interleukin signaling"/>
</dbReference>
<dbReference type="Reactome" id="R-MMU-5682910">
    <property type="pathway name" value="LGI-ADAM interactions"/>
</dbReference>
<dbReference type="Reactome" id="R-MMU-888590">
    <property type="pathway name" value="GABA synthesis, release, reuptake and degradation"/>
</dbReference>
<dbReference type="Reactome" id="R-MMU-9609523">
    <property type="pathway name" value="Insertion of tail-anchored proteins into the endoplasmic reticulum membrane"/>
</dbReference>
<dbReference type="BioGRID-ORCS" id="20907">
    <property type="hits" value="3 hits in 80 CRISPR screens"/>
</dbReference>
<dbReference type="ChiTaRS" id="Stx1a">
    <property type="organism name" value="mouse"/>
</dbReference>
<dbReference type="PRO" id="PR:O35526"/>
<dbReference type="Proteomes" id="UP000000589">
    <property type="component" value="Chromosome 5"/>
</dbReference>
<dbReference type="RNAct" id="O35526">
    <property type="molecule type" value="protein"/>
</dbReference>
<dbReference type="Bgee" id="ENSMUSG00000007207">
    <property type="expression patterns" value="Expressed in barrel cortex and 217 other cell types or tissues"/>
</dbReference>
<dbReference type="ExpressionAtlas" id="O35526">
    <property type="expression patterns" value="baseline and differential"/>
</dbReference>
<dbReference type="GO" id="GO:0001669">
    <property type="term" value="C:acrosomal vesicle"/>
    <property type="evidence" value="ECO:0000269"/>
    <property type="project" value="MGI"/>
</dbReference>
<dbReference type="GO" id="GO:0042641">
    <property type="term" value="C:actomyosin"/>
    <property type="evidence" value="ECO:0007669"/>
    <property type="project" value="Ensembl"/>
</dbReference>
<dbReference type="GO" id="GO:0030424">
    <property type="term" value="C:axon"/>
    <property type="evidence" value="ECO:0000314"/>
    <property type="project" value="SynGO-UCL"/>
</dbReference>
<dbReference type="GO" id="GO:0098978">
    <property type="term" value="C:glutamatergic synapse"/>
    <property type="evidence" value="ECO:0007669"/>
    <property type="project" value="Ensembl"/>
</dbReference>
<dbReference type="GO" id="GO:0016020">
    <property type="term" value="C:membrane"/>
    <property type="evidence" value="ECO:0000314"/>
    <property type="project" value="MGI"/>
</dbReference>
<dbReference type="GO" id="GO:0043005">
    <property type="term" value="C:neuron projection"/>
    <property type="evidence" value="ECO:0000314"/>
    <property type="project" value="MGI"/>
</dbReference>
<dbReference type="GO" id="GO:0031965">
    <property type="term" value="C:nuclear membrane"/>
    <property type="evidence" value="ECO:0000314"/>
    <property type="project" value="MGI"/>
</dbReference>
<dbReference type="GO" id="GO:0005886">
    <property type="term" value="C:plasma membrane"/>
    <property type="evidence" value="ECO:0000314"/>
    <property type="project" value="SynGO-UCL"/>
</dbReference>
<dbReference type="GO" id="GO:0098839">
    <property type="term" value="C:postsynaptic density membrane"/>
    <property type="evidence" value="ECO:0007669"/>
    <property type="project" value="Ensembl"/>
</dbReference>
<dbReference type="GO" id="GO:0048787">
    <property type="term" value="C:presynaptic active zone membrane"/>
    <property type="evidence" value="ECO:0007669"/>
    <property type="project" value="Ensembl"/>
</dbReference>
<dbReference type="GO" id="GO:0098685">
    <property type="term" value="C:Schaffer collateral - CA1 synapse"/>
    <property type="evidence" value="ECO:0007669"/>
    <property type="project" value="Ensembl"/>
</dbReference>
<dbReference type="GO" id="GO:0031201">
    <property type="term" value="C:SNARE complex"/>
    <property type="evidence" value="ECO:0000250"/>
    <property type="project" value="UniProtKB"/>
</dbReference>
<dbReference type="GO" id="GO:0008021">
    <property type="term" value="C:synaptic vesicle"/>
    <property type="evidence" value="ECO:0000314"/>
    <property type="project" value="UniProtKB"/>
</dbReference>
<dbReference type="GO" id="GO:0030672">
    <property type="term" value="C:synaptic vesicle membrane"/>
    <property type="evidence" value="ECO:0000314"/>
    <property type="project" value="MGI"/>
</dbReference>
<dbReference type="GO" id="GO:0070044">
    <property type="term" value="C:synaptobrevin 2-SNAP-25-syntaxin-1a complex"/>
    <property type="evidence" value="ECO:0000314"/>
    <property type="project" value="MGI"/>
</dbReference>
<dbReference type="GO" id="GO:0070032">
    <property type="term" value="C:synaptobrevin 2-SNAP-25-syntaxin-1a-complexin I complex"/>
    <property type="evidence" value="ECO:0000266"/>
    <property type="project" value="MGI"/>
</dbReference>
<dbReference type="GO" id="GO:0070033">
    <property type="term" value="C:synaptobrevin 2-SNAP-25-syntaxin-1a-complexin II complex"/>
    <property type="evidence" value="ECO:0007669"/>
    <property type="project" value="Ensembl"/>
</dbReference>
<dbReference type="GO" id="GO:0008076">
    <property type="term" value="C:voltage-gated potassium channel complex"/>
    <property type="evidence" value="ECO:0007669"/>
    <property type="project" value="Ensembl"/>
</dbReference>
<dbReference type="GO" id="GO:0043008">
    <property type="term" value="F:ATP-dependent protein binding"/>
    <property type="evidence" value="ECO:0007669"/>
    <property type="project" value="Ensembl"/>
</dbReference>
<dbReference type="GO" id="GO:0019855">
    <property type="term" value="F:calcium channel inhibitor activity"/>
    <property type="evidence" value="ECO:0000315"/>
    <property type="project" value="MGI"/>
</dbReference>
<dbReference type="GO" id="GO:0048306">
    <property type="term" value="F:calcium-dependent protein binding"/>
    <property type="evidence" value="ECO:0007669"/>
    <property type="project" value="Ensembl"/>
</dbReference>
<dbReference type="GO" id="GO:0019869">
    <property type="term" value="F:chloride channel inhibitor activity"/>
    <property type="evidence" value="ECO:0007669"/>
    <property type="project" value="Ensembl"/>
</dbReference>
<dbReference type="GO" id="GO:0042802">
    <property type="term" value="F:identical protein binding"/>
    <property type="evidence" value="ECO:0007669"/>
    <property type="project" value="Ensembl"/>
</dbReference>
<dbReference type="GO" id="GO:0019900">
    <property type="term" value="F:kinase binding"/>
    <property type="evidence" value="ECO:0007669"/>
    <property type="project" value="Ensembl"/>
</dbReference>
<dbReference type="GO" id="GO:0032028">
    <property type="term" value="F:myosin head/neck binding"/>
    <property type="evidence" value="ECO:0007669"/>
    <property type="project" value="Ensembl"/>
</dbReference>
<dbReference type="GO" id="GO:0044877">
    <property type="term" value="F:protein-containing complex binding"/>
    <property type="evidence" value="ECO:0007669"/>
    <property type="project" value="Ensembl"/>
</dbReference>
<dbReference type="GO" id="GO:0005484">
    <property type="term" value="F:SNAP receptor activity"/>
    <property type="evidence" value="ECO:0007669"/>
    <property type="project" value="InterPro"/>
</dbReference>
<dbReference type="GO" id="GO:0000149">
    <property type="term" value="F:SNARE binding"/>
    <property type="evidence" value="ECO:0000314"/>
    <property type="project" value="MGI"/>
</dbReference>
<dbReference type="GO" id="GO:0044325">
    <property type="term" value="F:transmembrane transporter binding"/>
    <property type="evidence" value="ECO:0007669"/>
    <property type="project" value="Ensembl"/>
</dbReference>
<dbReference type="GO" id="GO:0017156">
    <property type="term" value="P:calcium-ion regulated exocytosis"/>
    <property type="evidence" value="ECO:0000315"/>
    <property type="project" value="MGI"/>
</dbReference>
<dbReference type="GO" id="GO:0046879">
    <property type="term" value="P:hormone secretion"/>
    <property type="evidence" value="ECO:0000315"/>
    <property type="project" value="UniProtKB"/>
</dbReference>
<dbReference type="GO" id="GO:0030073">
    <property type="term" value="P:insulin secretion"/>
    <property type="evidence" value="ECO:0000315"/>
    <property type="project" value="UniProtKB"/>
</dbReference>
<dbReference type="GO" id="GO:0006886">
    <property type="term" value="P:intracellular protein transport"/>
    <property type="evidence" value="ECO:0007669"/>
    <property type="project" value="InterPro"/>
</dbReference>
<dbReference type="GO" id="GO:0045956">
    <property type="term" value="P:positive regulation of calcium ion-dependent exocytosis"/>
    <property type="evidence" value="ECO:0000250"/>
    <property type="project" value="UniProtKB"/>
</dbReference>
<dbReference type="GO" id="GO:0033605">
    <property type="term" value="P:positive regulation of catecholamine secretion"/>
    <property type="evidence" value="ECO:0000250"/>
    <property type="project" value="UniProtKB"/>
</dbReference>
<dbReference type="GO" id="GO:2000463">
    <property type="term" value="P:positive regulation of excitatory postsynaptic potential"/>
    <property type="evidence" value="ECO:0000316"/>
    <property type="project" value="ParkinsonsUK-UCL"/>
</dbReference>
<dbReference type="GO" id="GO:0001956">
    <property type="term" value="P:positive regulation of neurotransmitter secretion"/>
    <property type="evidence" value="ECO:0000316"/>
    <property type="project" value="ParkinsonsUK-UCL"/>
</dbReference>
<dbReference type="GO" id="GO:0010701">
    <property type="term" value="P:positive regulation of norepinephrine secretion"/>
    <property type="evidence" value="ECO:0000250"/>
    <property type="project" value="UniProtKB"/>
</dbReference>
<dbReference type="GO" id="GO:0072657">
    <property type="term" value="P:protein localization to membrane"/>
    <property type="evidence" value="ECO:0007669"/>
    <property type="project" value="Ensembl"/>
</dbReference>
<dbReference type="GO" id="GO:0016925">
    <property type="term" value="P:protein sumoylation"/>
    <property type="evidence" value="ECO:0007669"/>
    <property type="project" value="Ensembl"/>
</dbReference>
<dbReference type="GO" id="GO:0045055">
    <property type="term" value="P:regulated exocytosis"/>
    <property type="evidence" value="ECO:0000315"/>
    <property type="project" value="UniProtKB"/>
</dbReference>
<dbReference type="GO" id="GO:0010807">
    <property type="term" value="P:regulation of synaptic vesicle priming"/>
    <property type="evidence" value="ECO:0000316"/>
    <property type="project" value="ParkinsonsUK-UCL"/>
</dbReference>
<dbReference type="GO" id="GO:0009629">
    <property type="term" value="P:response to gravity"/>
    <property type="evidence" value="ECO:0007669"/>
    <property type="project" value="Ensembl"/>
</dbReference>
<dbReference type="GO" id="GO:0035493">
    <property type="term" value="P:SNARE complex assembly"/>
    <property type="evidence" value="ECO:0007669"/>
    <property type="project" value="Ensembl"/>
</dbReference>
<dbReference type="GO" id="GO:0016081">
    <property type="term" value="P:synaptic vesicle docking"/>
    <property type="evidence" value="ECO:0007669"/>
    <property type="project" value="Ensembl"/>
</dbReference>
<dbReference type="GO" id="GO:0048488">
    <property type="term" value="P:synaptic vesicle endocytosis"/>
    <property type="evidence" value="ECO:0007669"/>
    <property type="project" value="Ensembl"/>
</dbReference>
<dbReference type="GO" id="GO:0016079">
    <property type="term" value="P:synaptic vesicle exocytosis"/>
    <property type="evidence" value="ECO:0000314"/>
    <property type="project" value="SynGO"/>
</dbReference>
<dbReference type="GO" id="GO:0048278">
    <property type="term" value="P:vesicle docking"/>
    <property type="evidence" value="ECO:0000315"/>
    <property type="project" value="UniProtKB"/>
</dbReference>
<dbReference type="CDD" id="cd15880">
    <property type="entry name" value="SNARE_syntaxin1"/>
    <property type="match status" value="1"/>
</dbReference>
<dbReference type="CDD" id="cd00179">
    <property type="entry name" value="SynN"/>
    <property type="match status" value="1"/>
</dbReference>
<dbReference type="FunFam" id="1.20.58.70:FF:000042">
    <property type="entry name" value="Syntaxin 11b, tandem duplicate 2"/>
    <property type="match status" value="1"/>
</dbReference>
<dbReference type="FunFam" id="1.20.5.110:FF:000005">
    <property type="entry name" value="Syntaxin 1B"/>
    <property type="match status" value="1"/>
</dbReference>
<dbReference type="Gene3D" id="1.20.5.110">
    <property type="match status" value="1"/>
</dbReference>
<dbReference type="Gene3D" id="1.20.58.70">
    <property type="match status" value="1"/>
</dbReference>
<dbReference type="InterPro" id="IPR010989">
    <property type="entry name" value="SNARE"/>
</dbReference>
<dbReference type="InterPro" id="IPR045242">
    <property type="entry name" value="Syntaxin"/>
</dbReference>
<dbReference type="InterPro" id="IPR006012">
    <property type="entry name" value="Syntaxin/epimorphin_CS"/>
</dbReference>
<dbReference type="InterPro" id="IPR006011">
    <property type="entry name" value="Syntaxin_N"/>
</dbReference>
<dbReference type="InterPro" id="IPR000727">
    <property type="entry name" value="T_SNARE_dom"/>
</dbReference>
<dbReference type="PANTHER" id="PTHR19957">
    <property type="entry name" value="SYNTAXIN"/>
    <property type="match status" value="1"/>
</dbReference>
<dbReference type="PANTHER" id="PTHR19957:SF84">
    <property type="entry name" value="SYNTAXIN-1A"/>
    <property type="match status" value="1"/>
</dbReference>
<dbReference type="Pfam" id="PF05739">
    <property type="entry name" value="SNARE"/>
    <property type="match status" value="1"/>
</dbReference>
<dbReference type="Pfam" id="PF00804">
    <property type="entry name" value="Syntaxin"/>
    <property type="match status" value="1"/>
</dbReference>
<dbReference type="SMART" id="SM00503">
    <property type="entry name" value="SynN"/>
    <property type="match status" value="1"/>
</dbReference>
<dbReference type="SMART" id="SM00397">
    <property type="entry name" value="t_SNARE"/>
    <property type="match status" value="1"/>
</dbReference>
<dbReference type="SUPFAM" id="SSF47661">
    <property type="entry name" value="t-snare proteins"/>
    <property type="match status" value="1"/>
</dbReference>
<dbReference type="PROSITE" id="PS00914">
    <property type="entry name" value="SYNTAXIN"/>
    <property type="match status" value="1"/>
</dbReference>
<dbReference type="PROSITE" id="PS50192">
    <property type="entry name" value="T_SNARE"/>
    <property type="match status" value="1"/>
</dbReference>
<name>STX1A_MOUSE</name>